<reference key="1">
    <citation type="submission" date="2008-05" db="EMBL/GenBank/DDBJ databases">
        <title>Complete sequence of Rhodopseudomonas palustris TIE-1.</title>
        <authorList>
            <consortium name="US DOE Joint Genome Institute"/>
            <person name="Lucas S."/>
            <person name="Copeland A."/>
            <person name="Lapidus A."/>
            <person name="Glavina del Rio T."/>
            <person name="Dalin E."/>
            <person name="Tice H."/>
            <person name="Pitluck S."/>
            <person name="Chain P."/>
            <person name="Malfatti S."/>
            <person name="Shin M."/>
            <person name="Vergez L."/>
            <person name="Lang D."/>
            <person name="Schmutz J."/>
            <person name="Larimer F."/>
            <person name="Land M."/>
            <person name="Hauser L."/>
            <person name="Kyrpides N."/>
            <person name="Mikhailova N."/>
            <person name="Emerson D."/>
            <person name="Newman D.K."/>
            <person name="Roden E."/>
            <person name="Richardson P."/>
        </authorList>
    </citation>
    <scope>NUCLEOTIDE SEQUENCE [LARGE SCALE GENOMIC DNA]</scope>
    <source>
        <strain>TIE-1</strain>
    </source>
</reference>
<accession>B3QCC6</accession>
<organism>
    <name type="scientific">Rhodopseudomonas palustris (strain TIE-1)</name>
    <dbReference type="NCBI Taxonomy" id="395960"/>
    <lineage>
        <taxon>Bacteria</taxon>
        <taxon>Pseudomonadati</taxon>
        <taxon>Pseudomonadota</taxon>
        <taxon>Alphaproteobacteria</taxon>
        <taxon>Hyphomicrobiales</taxon>
        <taxon>Nitrobacteraceae</taxon>
        <taxon>Rhodopseudomonas</taxon>
    </lineage>
</organism>
<comment type="function">
    <text evidence="1">Transcriptional regulator.</text>
</comment>
<comment type="cofactor">
    <cofactor evidence="1">
        <name>Ni(2+)</name>
        <dbReference type="ChEBI" id="CHEBI:49786"/>
    </cofactor>
    <text evidence="1">Binds 1 nickel ion per subunit.</text>
</comment>
<comment type="similarity">
    <text evidence="1">Belongs to the transcriptional regulatory CopG/NikR family.</text>
</comment>
<feature type="chain" id="PRO_1000125837" description="Putative nickel-responsive regulator">
    <location>
        <begin position="1"/>
        <end position="147"/>
    </location>
</feature>
<feature type="binding site" evidence="1">
    <location>
        <position position="76"/>
    </location>
    <ligand>
        <name>Ni(2+)</name>
        <dbReference type="ChEBI" id="CHEBI:49786"/>
    </ligand>
</feature>
<feature type="binding site" evidence="1">
    <location>
        <position position="87"/>
    </location>
    <ligand>
        <name>Ni(2+)</name>
        <dbReference type="ChEBI" id="CHEBI:49786"/>
    </ligand>
</feature>
<feature type="binding site" evidence="1">
    <location>
        <position position="89"/>
    </location>
    <ligand>
        <name>Ni(2+)</name>
        <dbReference type="ChEBI" id="CHEBI:49786"/>
    </ligand>
</feature>
<feature type="binding site" evidence="1">
    <location>
        <position position="95"/>
    </location>
    <ligand>
        <name>Ni(2+)</name>
        <dbReference type="ChEBI" id="CHEBI:49786"/>
    </ligand>
</feature>
<protein>
    <recommendedName>
        <fullName evidence="1">Putative nickel-responsive regulator</fullName>
    </recommendedName>
</protein>
<keyword id="KW-0238">DNA-binding</keyword>
<keyword id="KW-0479">Metal-binding</keyword>
<keyword id="KW-0533">Nickel</keyword>
<keyword id="KW-0804">Transcription</keyword>
<keyword id="KW-0805">Transcription regulation</keyword>
<name>NIKR_RHOPT</name>
<sequence>MHRVTITLDDDLMEKLDAIIAARGYQNRSEAIRDLARIGIQQTAAETTSGHCVGAMVYTYDHSKRDLPRKLTQSFHHHHDLSRATMHVHLDHDQCLEVTILDGNASELQHFADHIFAERGVRYGRLVTIPAEPPEAHEHHHEHDASS</sequence>
<dbReference type="EMBL" id="CP001096">
    <property type="protein sequence ID" value="ACF03727.1"/>
    <property type="molecule type" value="Genomic_DNA"/>
</dbReference>
<dbReference type="RefSeq" id="WP_012497869.1">
    <property type="nucleotide sequence ID" value="NC_011004.1"/>
</dbReference>
<dbReference type="SMR" id="B3QCC6"/>
<dbReference type="KEGG" id="rpt:Rpal_5239"/>
<dbReference type="HOGENOM" id="CLU_113319_1_4_5"/>
<dbReference type="OrthoDB" id="9806294at2"/>
<dbReference type="Proteomes" id="UP000001725">
    <property type="component" value="Chromosome"/>
</dbReference>
<dbReference type="GO" id="GO:0003677">
    <property type="term" value="F:DNA binding"/>
    <property type="evidence" value="ECO:0007669"/>
    <property type="project" value="UniProtKB-KW"/>
</dbReference>
<dbReference type="GO" id="GO:0003700">
    <property type="term" value="F:DNA-binding transcription factor activity"/>
    <property type="evidence" value="ECO:0007669"/>
    <property type="project" value="UniProtKB-UniRule"/>
</dbReference>
<dbReference type="GO" id="GO:0016151">
    <property type="term" value="F:nickel cation binding"/>
    <property type="evidence" value="ECO:0007669"/>
    <property type="project" value="UniProtKB-UniRule"/>
</dbReference>
<dbReference type="GO" id="GO:0010045">
    <property type="term" value="P:response to nickel cation"/>
    <property type="evidence" value="ECO:0007669"/>
    <property type="project" value="InterPro"/>
</dbReference>
<dbReference type="CDD" id="cd22231">
    <property type="entry name" value="RHH_NikR_HicB-like"/>
    <property type="match status" value="1"/>
</dbReference>
<dbReference type="Gene3D" id="3.30.70.1150">
    <property type="entry name" value="ACT-like. Chain A, domain 2"/>
    <property type="match status" value="1"/>
</dbReference>
<dbReference type="Gene3D" id="1.10.1220.10">
    <property type="entry name" value="Met repressor-like"/>
    <property type="match status" value="1"/>
</dbReference>
<dbReference type="HAMAP" id="MF_00476">
    <property type="entry name" value="NikR"/>
    <property type="match status" value="1"/>
</dbReference>
<dbReference type="InterPro" id="IPR027271">
    <property type="entry name" value="Acetolactate_synth/TF_NikR_C"/>
</dbReference>
<dbReference type="InterPro" id="IPR045865">
    <property type="entry name" value="ACT-like_dom_sf"/>
</dbReference>
<dbReference type="InterPro" id="IPR013321">
    <property type="entry name" value="Arc_rbn_hlx_hlx"/>
</dbReference>
<dbReference type="InterPro" id="IPR002145">
    <property type="entry name" value="CopG"/>
</dbReference>
<dbReference type="InterPro" id="IPR050192">
    <property type="entry name" value="CopG/NikR_regulator"/>
</dbReference>
<dbReference type="InterPro" id="IPR022988">
    <property type="entry name" value="Ni_resp_reg_NikR"/>
</dbReference>
<dbReference type="InterPro" id="IPR014160">
    <property type="entry name" value="Nickel_NikR_proteobac"/>
</dbReference>
<dbReference type="InterPro" id="IPR010985">
    <property type="entry name" value="Ribbon_hlx_hlx"/>
</dbReference>
<dbReference type="InterPro" id="IPR014864">
    <property type="entry name" value="TF_NikR_Ni-bd_C"/>
</dbReference>
<dbReference type="NCBIfam" id="TIGR02793">
    <property type="entry name" value="nikR"/>
    <property type="match status" value="1"/>
</dbReference>
<dbReference type="NCBIfam" id="NF002169">
    <property type="entry name" value="PRK01002.1"/>
    <property type="match status" value="1"/>
</dbReference>
<dbReference type="NCBIfam" id="NF002815">
    <property type="entry name" value="PRK02967.1"/>
    <property type="match status" value="1"/>
</dbReference>
<dbReference type="NCBIfam" id="NF003381">
    <property type="entry name" value="PRK04460.1"/>
    <property type="match status" value="1"/>
</dbReference>
<dbReference type="PANTHER" id="PTHR34719">
    <property type="entry name" value="NICKEL-RESPONSIVE REGULATOR"/>
    <property type="match status" value="1"/>
</dbReference>
<dbReference type="PANTHER" id="PTHR34719:SF2">
    <property type="entry name" value="NICKEL-RESPONSIVE REGULATOR"/>
    <property type="match status" value="1"/>
</dbReference>
<dbReference type="Pfam" id="PF08753">
    <property type="entry name" value="NikR_C"/>
    <property type="match status" value="1"/>
</dbReference>
<dbReference type="Pfam" id="PF01402">
    <property type="entry name" value="RHH_1"/>
    <property type="match status" value="1"/>
</dbReference>
<dbReference type="SUPFAM" id="SSF55021">
    <property type="entry name" value="ACT-like"/>
    <property type="match status" value="1"/>
</dbReference>
<dbReference type="SUPFAM" id="SSF47598">
    <property type="entry name" value="Ribbon-helix-helix"/>
    <property type="match status" value="1"/>
</dbReference>
<gene>
    <name type="ordered locus">Rpal_5239</name>
</gene>
<evidence type="ECO:0000255" key="1">
    <source>
        <dbReference type="HAMAP-Rule" id="MF_00476"/>
    </source>
</evidence>
<proteinExistence type="inferred from homology"/>